<organism>
    <name type="scientific">Influenza A virus (strain A/Memphis/2/1978 H3N2)</name>
    <dbReference type="NCBI Taxonomy" id="383580"/>
    <lineage>
        <taxon>Viruses</taxon>
        <taxon>Riboviria</taxon>
        <taxon>Orthornavirae</taxon>
        <taxon>Negarnaviricota</taxon>
        <taxon>Polyploviricotina</taxon>
        <taxon>Insthoviricetes</taxon>
        <taxon>Articulavirales</taxon>
        <taxon>Orthomyxoviridae</taxon>
        <taxon>Alphainfluenzavirus</taxon>
        <taxon>Alphainfluenzavirus influenzae</taxon>
        <taxon>Influenza A virus</taxon>
    </lineage>
</organism>
<feature type="chain" id="PRO_0000324216" description="Nuclear export protein">
    <location>
        <begin position="1"/>
        <end position="121"/>
    </location>
</feature>
<feature type="short sequence motif" description="Nuclear export signal" evidence="1">
    <location>
        <begin position="12"/>
        <end position="21"/>
    </location>
</feature>
<feature type="short sequence motif" description="Nuclear export signal" evidence="1">
    <location>
        <begin position="85"/>
        <end position="94"/>
    </location>
</feature>
<proteinExistence type="inferred from homology"/>
<gene>
    <name evidence="1" type="primary">NS</name>
</gene>
<dbReference type="EMBL" id="CY006695">
    <property type="protein sequence ID" value="ABB96325.1"/>
    <property type="molecule type" value="Genomic_RNA"/>
</dbReference>
<dbReference type="SMR" id="Q2VNE8"/>
<dbReference type="Proteomes" id="UP000007555">
    <property type="component" value="Genome"/>
</dbReference>
<dbReference type="GO" id="GO:0042025">
    <property type="term" value="C:host cell nucleus"/>
    <property type="evidence" value="ECO:0007669"/>
    <property type="project" value="UniProtKB-SubCell"/>
</dbReference>
<dbReference type="GO" id="GO:0044423">
    <property type="term" value="C:virion component"/>
    <property type="evidence" value="ECO:0007669"/>
    <property type="project" value="UniProtKB-UniRule"/>
</dbReference>
<dbReference type="GO" id="GO:0039675">
    <property type="term" value="P:exit of virus from host cell nucleus through nuclear pore"/>
    <property type="evidence" value="ECO:0007669"/>
    <property type="project" value="UniProtKB-UniRule"/>
</dbReference>
<dbReference type="Gene3D" id="1.10.287.230">
    <property type="match status" value="1"/>
</dbReference>
<dbReference type="Gene3D" id="1.10.287.10">
    <property type="entry name" value="S15/NS1, RNA-binding"/>
    <property type="match status" value="1"/>
</dbReference>
<dbReference type="HAMAP" id="MF_04067">
    <property type="entry name" value="INFV_NEP"/>
    <property type="match status" value="1"/>
</dbReference>
<dbReference type="InterPro" id="IPR000968">
    <property type="entry name" value="Flu_NS2"/>
</dbReference>
<dbReference type="Pfam" id="PF00601">
    <property type="entry name" value="Flu_NS2"/>
    <property type="match status" value="1"/>
</dbReference>
<dbReference type="SUPFAM" id="SSF101156">
    <property type="entry name" value="Nonstructural protein ns2, Nep, M1-binding domain"/>
    <property type="match status" value="1"/>
</dbReference>
<organismHost>
    <name type="scientific">Aves</name>
    <dbReference type="NCBI Taxonomy" id="8782"/>
</organismHost>
<organismHost>
    <name type="scientific">Cetacea</name>
    <name type="common">whales</name>
    <dbReference type="NCBI Taxonomy" id="9721"/>
</organismHost>
<organismHost>
    <name type="scientific">Homo sapiens</name>
    <name type="common">Human</name>
    <dbReference type="NCBI Taxonomy" id="9606"/>
</organismHost>
<organismHost>
    <name type="scientific">Phocidae</name>
    <name type="common">true seals</name>
    <dbReference type="NCBI Taxonomy" id="9709"/>
</organismHost>
<organismHost>
    <name type="scientific">Sus scrofa</name>
    <name type="common">Pig</name>
    <dbReference type="NCBI Taxonomy" id="9823"/>
</organismHost>
<protein>
    <recommendedName>
        <fullName evidence="1">Nuclear export protein</fullName>
        <shortName evidence="1">NEP</shortName>
    </recommendedName>
    <alternativeName>
        <fullName evidence="1">Non-structural protein 2</fullName>
        <shortName evidence="1">NS2</shortName>
    </alternativeName>
</protein>
<reference key="1">
    <citation type="submission" date="2005-12" db="EMBL/GenBank/DDBJ databases">
        <title>The NIAID influenza genome sequencing project.</title>
        <authorList>
            <person name="Ghedin E."/>
            <person name="Spiro D."/>
            <person name="Miller N."/>
            <person name="Zaborsky J."/>
            <person name="Feldblyum T."/>
            <person name="Subbu V."/>
            <person name="Shumway M."/>
            <person name="Sparenborg J."/>
            <person name="Groveman L."/>
            <person name="Halpin R."/>
            <person name="Sitz J."/>
            <person name="Koo H."/>
            <person name="Salzberg S.L."/>
            <person name="Webster R.G."/>
            <person name="Hoffmann E."/>
            <person name="Krauss S."/>
            <person name="Naeve C."/>
            <person name="Bao Y."/>
            <person name="Bolotov P."/>
            <person name="Dernovoy D."/>
            <person name="Kiryutin B."/>
            <person name="Lipman D.J."/>
            <person name="Tatusova T."/>
        </authorList>
    </citation>
    <scope>NUCLEOTIDE SEQUENCE [GENOMIC RNA]</scope>
</reference>
<accession>Q2VNE8</accession>
<sequence length="121" mass="14365">MDSNTVSSFQDILLRMSKMQLGSSSEDLNGMITQFESLKLYRDSLGEAVMRMGDLHLLQNRNGKWREQLGQKFEEIRWLIEEVRHRLKTTENSFEQITFMQALQLLFEVEQEIRTFSFQLI</sequence>
<keyword id="KW-0025">Alternative splicing</keyword>
<keyword id="KW-1048">Host nucleus</keyword>
<keyword id="KW-0945">Host-virus interaction</keyword>
<keyword id="KW-0813">Transport</keyword>
<keyword id="KW-0946">Virion</keyword>
<comment type="function">
    <text evidence="1">Mediates the nuclear export of encapsidated genomic RNAs (ribonucleoproteins, RNPs). Acts as an adapter between viral RNPs complexes and the nuclear export machinery of the cell. Possesses no intrinsic RNA-binding activity, but includes a C-terminal M1-binding domain. This domain is believed to allow recognition of RNPs bound to the protein M1. Since protein M1 is not available in large quantities before late stages of infection, such an indirect recognition mechanism probably ensures that genomic RNPs are not exported from the host nucleus until sufficient quantities of viral mRNA and progeny genomic RNA have been synthesized. Furthermore, the RNPs enter the host cytoplasm only when associated with the M1 protein that is necessary to guide them to the plasma membrane. May down-regulate viral RNA synthesis when overproduced.</text>
</comment>
<comment type="subunit">
    <text evidence="1">Interacts with protein M1. May interact with host nucleoporin RAB/HRB and exportin XPO1/CRM1.</text>
</comment>
<comment type="subcellular location">
    <subcellularLocation>
        <location evidence="1">Virion</location>
    </subcellularLocation>
    <subcellularLocation>
        <location evidence="1">Host nucleus</location>
    </subcellularLocation>
</comment>
<comment type="alternative products">
    <event type="alternative splicing"/>
    <isoform>
        <id>Q2VNE8-1</id>
        <name>NEP</name>
        <name>NS2</name>
        <sequence type="displayed"/>
    </isoform>
    <isoform>
        <id>Q2VNE7-1</id>
        <name>NS1</name>
        <sequence type="external"/>
    </isoform>
</comment>
<comment type="similarity">
    <text evidence="1">Belongs to the influenza viruses NEP family.</text>
</comment>
<name>NEP_I78A7</name>
<evidence type="ECO:0000255" key="1">
    <source>
        <dbReference type="HAMAP-Rule" id="MF_04067"/>
    </source>
</evidence>